<feature type="initiator methionine" description="Removed" evidence="35 39 40">
    <location>
        <position position="1"/>
    </location>
</feature>
<feature type="chain" id="PRO_0000248604" description="17S U2 SnRNP complex component HTATSF1">
    <location>
        <begin position="2"/>
        <end position="755"/>
    </location>
</feature>
<feature type="domain" description="RRM 1" evidence="2">
    <location>
        <begin position="133"/>
        <end position="218"/>
    </location>
</feature>
<feature type="domain" description="RRM 2" evidence="2">
    <location>
        <begin position="264"/>
        <end position="349"/>
    </location>
</feature>
<feature type="region of interest" description="Disordered" evidence="3">
    <location>
        <begin position="1"/>
        <end position="53"/>
    </location>
</feature>
<feature type="region of interest" description="Disordered" evidence="3">
    <location>
        <begin position="81"/>
        <end position="122"/>
    </location>
</feature>
<feature type="region of interest" description="U2AF homology motif (UHM)" evidence="11">
    <location>
        <begin position="259"/>
        <end position="353"/>
    </location>
</feature>
<feature type="region of interest" description="Disordered" evidence="3">
    <location>
        <begin position="380"/>
        <end position="415"/>
    </location>
</feature>
<feature type="region of interest" description="Mediates interaction with the P-TEFb complex" evidence="16">
    <location>
        <begin position="381"/>
        <end position="755"/>
    </location>
</feature>
<feature type="region of interest" description="Disordered" evidence="3">
    <location>
        <begin position="433"/>
        <end position="755"/>
    </location>
</feature>
<feature type="compositionally biased region" description="Basic and acidic residues" evidence="3">
    <location>
        <begin position="90"/>
        <end position="122"/>
    </location>
</feature>
<feature type="compositionally biased region" description="Polar residues" evidence="3">
    <location>
        <begin position="405"/>
        <end position="415"/>
    </location>
</feature>
<feature type="compositionally biased region" description="Basic and acidic residues" evidence="3">
    <location>
        <begin position="462"/>
        <end position="476"/>
    </location>
</feature>
<feature type="compositionally biased region" description="Basic and acidic residues" evidence="3">
    <location>
        <begin position="508"/>
        <end position="538"/>
    </location>
</feature>
<feature type="compositionally biased region" description="Acidic residues" evidence="3">
    <location>
        <begin position="539"/>
        <end position="552"/>
    </location>
</feature>
<feature type="compositionally biased region" description="Basic and acidic residues" evidence="3">
    <location>
        <begin position="553"/>
        <end position="563"/>
    </location>
</feature>
<feature type="compositionally biased region" description="Acidic residues" evidence="3">
    <location>
        <begin position="564"/>
        <end position="579"/>
    </location>
</feature>
<feature type="compositionally biased region" description="Basic and acidic residues" evidence="3">
    <location>
        <begin position="580"/>
        <end position="590"/>
    </location>
</feature>
<feature type="compositionally biased region" description="Acidic residues" evidence="3">
    <location>
        <begin position="591"/>
        <end position="606"/>
    </location>
</feature>
<feature type="compositionally biased region" description="Acidic residues" evidence="3">
    <location>
        <begin position="613"/>
        <end position="633"/>
    </location>
</feature>
<feature type="compositionally biased region" description="Acidic residues" evidence="3">
    <location>
        <begin position="640"/>
        <end position="651"/>
    </location>
</feature>
<feature type="compositionally biased region" description="Basic and acidic residues" evidence="3">
    <location>
        <begin position="652"/>
        <end position="674"/>
    </location>
</feature>
<feature type="compositionally biased region" description="Acidic residues" evidence="3">
    <location>
        <begin position="675"/>
        <end position="713"/>
    </location>
</feature>
<feature type="compositionally biased region" description="Basic and acidic residues" evidence="3">
    <location>
        <begin position="714"/>
        <end position="725"/>
    </location>
</feature>
<feature type="modified residue" description="N-acetylserine" evidence="35 39 40">
    <location>
        <position position="2"/>
    </location>
</feature>
<feature type="modified residue" description="N6-acetyllysine" evidence="1">
    <location>
        <position position="297"/>
    </location>
</feature>
<feature type="modified residue" description="Phosphoserine" evidence="37 38">
    <location>
        <position position="387"/>
    </location>
</feature>
<feature type="modified residue" description="Phosphoserine" evidence="37">
    <location>
        <position position="403"/>
    </location>
</feature>
<feature type="modified residue" description="Phosphoserine" evidence="37">
    <location>
        <position position="407"/>
    </location>
</feature>
<feature type="modified residue" description="Phosphoserine" evidence="1">
    <location>
        <position position="409"/>
    </location>
</feature>
<feature type="modified residue" description="Phosphoserine" evidence="37 41">
    <location>
        <position position="445"/>
    </location>
</feature>
<feature type="modified residue" description="Phosphoserine" evidence="34">
    <location>
        <position position="452"/>
    </location>
</feature>
<feature type="modified residue" description="Phosphoserine" evidence="34">
    <location>
        <position position="453"/>
    </location>
</feature>
<feature type="modified residue" description="Phosphoserine" evidence="41">
    <location>
        <position position="481"/>
    </location>
</feature>
<feature type="modified residue" description="Phosphoserine" evidence="38">
    <location>
        <position position="485"/>
    </location>
</feature>
<feature type="modified residue" description="Phosphoserine" evidence="41">
    <location>
        <position position="494"/>
    </location>
</feature>
<feature type="modified residue" description="Phosphoserine" evidence="32 34 37 41">
    <location>
        <position position="498"/>
    </location>
</feature>
<feature type="modified residue" description="Phosphoserine" evidence="41">
    <location>
        <position position="521"/>
    </location>
</feature>
<feature type="modified residue" description="Phosphoserine" evidence="41">
    <location>
        <position position="529"/>
    </location>
</feature>
<feature type="modified residue" description="Phosphoserine" evidence="32">
    <location>
        <position position="557"/>
    </location>
</feature>
<feature type="modified residue" description="Phosphoserine" evidence="32">
    <location>
        <position position="561"/>
    </location>
</feature>
<feature type="modified residue" description="Phosphoserine" evidence="32 33 37 38 41 42">
    <location>
        <position position="579"/>
    </location>
</feature>
<feature type="modified residue" description="Phosphoserine" evidence="32 38">
    <location>
        <position position="597"/>
    </location>
</feature>
<feature type="modified residue" description="Phosphoserine" evidence="32 38">
    <location>
        <position position="600"/>
    </location>
</feature>
<feature type="modified residue" description="Phosphoserine" evidence="38">
    <location>
        <position position="607"/>
    </location>
</feature>
<feature type="modified residue" description="Phosphoserine" evidence="32 33 37 38 41">
    <location>
        <position position="616"/>
    </location>
</feature>
<feature type="modified residue" description="Phosphoserine" evidence="32 33 37 41">
    <location>
        <position position="624"/>
    </location>
</feature>
<feature type="modified residue" description="Phosphothreonine" evidence="37">
    <location>
        <position position="633"/>
    </location>
</feature>
<feature type="modified residue" description="Phosphoserine" evidence="32 33 34 36 37 38 41 42">
    <location>
        <position position="642"/>
    </location>
</feature>
<feature type="modified residue" description="Phosphoserine" evidence="32 33 37 38 41">
    <location>
        <position position="676"/>
    </location>
</feature>
<feature type="modified residue" description="Phosphoserine" evidence="32 36 37 38 41 42">
    <location>
        <position position="702"/>
    </location>
</feature>
<feature type="modified residue" description="Phosphoserine" evidence="32 34 36 37 38 41">
    <location>
        <position position="713"/>
    </location>
</feature>
<feature type="modified residue" description="Phosphoserine" evidence="32 34 36 37 38 41">
    <location>
        <position position="714"/>
    </location>
</feature>
<feature type="modified residue" description="Phosphoserine" evidence="37 38 41">
    <location>
        <position position="721"/>
    </location>
</feature>
<feature type="modified residue" description="Phosphoserine; by CK2" evidence="14">
    <location>
        <position position="748"/>
    </location>
</feature>
<feature type="cross-link" description="Glycyl lysine isopeptide (Lys-Gly) (interchain with G-Cter in SUMO2)" evidence="43">
    <location>
        <position position="429"/>
    </location>
</feature>
<feature type="cross-link" description="Glycyl lysine isopeptide (Lys-Gly) (interchain with G-Cter in SUMO2)" evidence="43">
    <location>
        <position position="430"/>
    </location>
</feature>
<feature type="sequence variant" id="VAR_027362" description="In dbSNP:rs2071913." evidence="19">
    <original>G</original>
    <variation>A</variation>
    <location>
        <position position="478"/>
    </location>
</feature>
<feature type="sequence variant" id="VAR_052206" description="In dbSNP:rs12852634.">
    <original>N</original>
    <variation>T</variation>
    <location>
        <position position="526"/>
    </location>
</feature>
<feature type="sequence variant" id="VAR_052207" description="In dbSNP:rs17339410.">
    <original>D</original>
    <variation>G</variation>
    <location>
        <position position="678"/>
    </location>
</feature>
<feature type="mutagenesis site" description="Loss of interaction with U snRNPs." evidence="8">
    <original>Y</original>
    <variation>D</variation>
    <location>
        <position position="136"/>
    </location>
</feature>
<feature type="mutagenesis site" description="In 4A mutant; abolished binding to poly-ADP-ribosylated RPA1 and recruitment to DNA damage sites; when associated with 297-A-A-298." evidence="14">
    <original>KF</original>
    <variation>AA</variation>
    <location>
        <begin position="155"/>
        <end position="156"/>
    </location>
</feature>
<feature type="mutagenesis site" description="In 4A mutant; abolished binding to poly-ADP-ribosylated RPA1 and recruitment to DNA damage sites; when associated with 155-A-A-156." evidence="14">
    <original>KF</original>
    <variation>AA</variation>
    <location>
        <begin position="297"/>
        <end position="298"/>
    </location>
</feature>
<feature type="mutagenesis site" description="Impaired phosphorylation by CK2, leading to abolish interaction with TOPBP1." evidence="14">
    <original>S</original>
    <variation>A</variation>
    <location>
        <position position="748"/>
    </location>
</feature>
<feature type="sequence conflict" description="In Ref. 3; BAD92540." evidence="22" ref="3">
    <original>F</original>
    <variation>V</variation>
    <location>
        <position position="125"/>
    </location>
</feature>
<feature type="sequence conflict" description="In Ref. 3; BAD92540." evidence="22" ref="3">
    <original>V</original>
    <variation>I</variation>
    <location>
        <position position="587"/>
    </location>
</feature>
<feature type="strand" evidence="46">
    <location>
        <begin position="134"/>
        <end position="139"/>
    </location>
</feature>
<feature type="helix" evidence="46">
    <location>
        <begin position="146"/>
        <end position="154"/>
    </location>
</feature>
<feature type="strand" evidence="45">
    <location>
        <begin position="165"/>
        <end position="174"/>
    </location>
</feature>
<feature type="strand" evidence="45">
    <location>
        <begin position="176"/>
        <end position="178"/>
    </location>
</feature>
<feature type="strand" evidence="46">
    <location>
        <begin position="185"/>
        <end position="190"/>
    </location>
</feature>
<feature type="helix" evidence="46">
    <location>
        <begin position="192"/>
        <end position="200"/>
    </location>
</feature>
<feature type="turn" evidence="46">
    <location>
        <begin position="201"/>
        <end position="203"/>
    </location>
</feature>
<feature type="strand" evidence="46">
    <location>
        <begin position="212"/>
        <end position="214"/>
    </location>
</feature>
<feature type="helix" evidence="46">
    <location>
        <begin position="241"/>
        <end position="244"/>
    </location>
</feature>
<feature type="helix" evidence="44">
    <location>
        <begin position="261"/>
        <end position="264"/>
    </location>
</feature>
<feature type="strand" evidence="44">
    <location>
        <begin position="265"/>
        <end position="269"/>
    </location>
</feature>
<feature type="helix" evidence="44">
    <location>
        <begin position="274"/>
        <end position="277"/>
    </location>
</feature>
<feature type="helix" evidence="44">
    <location>
        <begin position="282"/>
        <end position="295"/>
    </location>
</feature>
<feature type="turn" evidence="44">
    <location>
        <begin position="296"/>
        <end position="298"/>
    </location>
</feature>
<feature type="strand" evidence="44">
    <location>
        <begin position="301"/>
        <end position="306"/>
    </location>
</feature>
<feature type="strand" evidence="44">
    <location>
        <begin position="315"/>
        <end position="321"/>
    </location>
</feature>
<feature type="helix" evidence="44">
    <location>
        <begin position="322"/>
        <end position="332"/>
    </location>
</feature>
<feature type="strand" evidence="44">
    <location>
        <begin position="343"/>
        <end position="346"/>
    </location>
</feature>
<reference key="1">
    <citation type="journal article" date="1996" name="Science">
        <title>Tat-SF1: cofactor for stimulation of transcriptional elongation by HIV-1 Tat.</title>
        <authorList>
            <person name="Zhou Q."/>
            <person name="Sharp P.A."/>
        </authorList>
    </citation>
    <scope>NUCLEOTIDE SEQUENCE [MRNA]</scope>
    <scope>PROTEIN SEQUENCE OF 26-45; 62-79; 155-169; 199-210; 239-245 AND 410-428</scope>
    <scope>FUNCTION (MICROBIAL INFECTION)</scope>
    <scope>SUBCELLULAR LOCATION</scope>
    <scope>TISSUE SPECIFICITY</scope>
    <source>
        <tissue>Promyelocytic leukemia</tissue>
    </source>
</reference>
<reference key="2">
    <citation type="submission" date="2003-05" db="EMBL/GenBank/DDBJ databases">
        <title>Cloning of human full-length CDSs in BD Creator(TM) system donor vector.</title>
        <authorList>
            <person name="Kalnine N."/>
            <person name="Chen X."/>
            <person name="Rolfs A."/>
            <person name="Halleck A."/>
            <person name="Hines L."/>
            <person name="Eisenstein S."/>
            <person name="Koundinya M."/>
            <person name="Raphael J."/>
            <person name="Moreira D."/>
            <person name="Kelley T."/>
            <person name="LaBaer J."/>
            <person name="Lin Y."/>
            <person name="Phelan M."/>
            <person name="Farmer A."/>
        </authorList>
    </citation>
    <scope>NUCLEOTIDE SEQUENCE [LARGE SCALE MRNA]</scope>
</reference>
<reference key="3">
    <citation type="submission" date="2005-03" db="EMBL/GenBank/DDBJ databases">
        <authorList>
            <person name="Totoki Y."/>
            <person name="Toyoda A."/>
            <person name="Takeda T."/>
            <person name="Sakaki Y."/>
            <person name="Tanaka A."/>
            <person name="Yokoyama S."/>
            <person name="Ohara O."/>
            <person name="Nagase T."/>
            <person name="Kikuno R.F."/>
        </authorList>
    </citation>
    <scope>NUCLEOTIDE SEQUENCE [LARGE SCALE MRNA]</scope>
    <scope>VARIANT ALA-478</scope>
    <source>
        <tissue>Brain</tissue>
    </source>
</reference>
<reference key="4">
    <citation type="journal article" date="2005" name="Nature">
        <title>The DNA sequence of the human X chromosome.</title>
        <authorList>
            <person name="Ross M.T."/>
            <person name="Grafham D.V."/>
            <person name="Coffey A.J."/>
            <person name="Scherer S."/>
            <person name="McLay K."/>
            <person name="Muzny D."/>
            <person name="Platzer M."/>
            <person name="Howell G.R."/>
            <person name="Burrows C."/>
            <person name="Bird C.P."/>
            <person name="Frankish A."/>
            <person name="Lovell F.L."/>
            <person name="Howe K.L."/>
            <person name="Ashurst J.L."/>
            <person name="Fulton R.S."/>
            <person name="Sudbrak R."/>
            <person name="Wen G."/>
            <person name="Jones M.C."/>
            <person name="Hurles M.E."/>
            <person name="Andrews T.D."/>
            <person name="Scott C.E."/>
            <person name="Searle S."/>
            <person name="Ramser J."/>
            <person name="Whittaker A."/>
            <person name="Deadman R."/>
            <person name="Carter N.P."/>
            <person name="Hunt S.E."/>
            <person name="Chen R."/>
            <person name="Cree A."/>
            <person name="Gunaratne P."/>
            <person name="Havlak P."/>
            <person name="Hodgson A."/>
            <person name="Metzker M.L."/>
            <person name="Richards S."/>
            <person name="Scott G."/>
            <person name="Steffen D."/>
            <person name="Sodergren E."/>
            <person name="Wheeler D.A."/>
            <person name="Worley K.C."/>
            <person name="Ainscough R."/>
            <person name="Ambrose K.D."/>
            <person name="Ansari-Lari M.A."/>
            <person name="Aradhya S."/>
            <person name="Ashwell R.I."/>
            <person name="Babbage A.K."/>
            <person name="Bagguley C.L."/>
            <person name="Ballabio A."/>
            <person name="Banerjee R."/>
            <person name="Barker G.E."/>
            <person name="Barlow K.F."/>
            <person name="Barrett I.P."/>
            <person name="Bates K.N."/>
            <person name="Beare D.M."/>
            <person name="Beasley H."/>
            <person name="Beasley O."/>
            <person name="Beck A."/>
            <person name="Bethel G."/>
            <person name="Blechschmidt K."/>
            <person name="Brady N."/>
            <person name="Bray-Allen S."/>
            <person name="Bridgeman A.M."/>
            <person name="Brown A.J."/>
            <person name="Brown M.J."/>
            <person name="Bonnin D."/>
            <person name="Bruford E.A."/>
            <person name="Buhay C."/>
            <person name="Burch P."/>
            <person name="Burford D."/>
            <person name="Burgess J."/>
            <person name="Burrill W."/>
            <person name="Burton J."/>
            <person name="Bye J.M."/>
            <person name="Carder C."/>
            <person name="Carrel L."/>
            <person name="Chako J."/>
            <person name="Chapman J.C."/>
            <person name="Chavez D."/>
            <person name="Chen E."/>
            <person name="Chen G."/>
            <person name="Chen Y."/>
            <person name="Chen Z."/>
            <person name="Chinault C."/>
            <person name="Ciccodicola A."/>
            <person name="Clark S.Y."/>
            <person name="Clarke G."/>
            <person name="Clee C.M."/>
            <person name="Clegg S."/>
            <person name="Clerc-Blankenburg K."/>
            <person name="Clifford K."/>
            <person name="Cobley V."/>
            <person name="Cole C.G."/>
            <person name="Conquer J.S."/>
            <person name="Corby N."/>
            <person name="Connor R.E."/>
            <person name="David R."/>
            <person name="Davies J."/>
            <person name="Davis C."/>
            <person name="Davis J."/>
            <person name="Delgado O."/>
            <person name="Deshazo D."/>
            <person name="Dhami P."/>
            <person name="Ding Y."/>
            <person name="Dinh H."/>
            <person name="Dodsworth S."/>
            <person name="Draper H."/>
            <person name="Dugan-Rocha S."/>
            <person name="Dunham A."/>
            <person name="Dunn M."/>
            <person name="Durbin K.J."/>
            <person name="Dutta I."/>
            <person name="Eades T."/>
            <person name="Ellwood M."/>
            <person name="Emery-Cohen A."/>
            <person name="Errington H."/>
            <person name="Evans K.L."/>
            <person name="Faulkner L."/>
            <person name="Francis F."/>
            <person name="Frankland J."/>
            <person name="Fraser A.E."/>
            <person name="Galgoczy P."/>
            <person name="Gilbert J."/>
            <person name="Gill R."/>
            <person name="Gloeckner G."/>
            <person name="Gregory S.G."/>
            <person name="Gribble S."/>
            <person name="Griffiths C."/>
            <person name="Grocock R."/>
            <person name="Gu Y."/>
            <person name="Gwilliam R."/>
            <person name="Hamilton C."/>
            <person name="Hart E.A."/>
            <person name="Hawes A."/>
            <person name="Heath P.D."/>
            <person name="Heitmann K."/>
            <person name="Hennig S."/>
            <person name="Hernandez J."/>
            <person name="Hinzmann B."/>
            <person name="Ho S."/>
            <person name="Hoffs M."/>
            <person name="Howden P.J."/>
            <person name="Huckle E.J."/>
            <person name="Hume J."/>
            <person name="Hunt P.J."/>
            <person name="Hunt A.R."/>
            <person name="Isherwood J."/>
            <person name="Jacob L."/>
            <person name="Johnson D."/>
            <person name="Jones S."/>
            <person name="de Jong P.J."/>
            <person name="Joseph S.S."/>
            <person name="Keenan S."/>
            <person name="Kelly S."/>
            <person name="Kershaw J.K."/>
            <person name="Khan Z."/>
            <person name="Kioschis P."/>
            <person name="Klages S."/>
            <person name="Knights A.J."/>
            <person name="Kosiura A."/>
            <person name="Kovar-Smith C."/>
            <person name="Laird G.K."/>
            <person name="Langford C."/>
            <person name="Lawlor S."/>
            <person name="Leversha M."/>
            <person name="Lewis L."/>
            <person name="Liu W."/>
            <person name="Lloyd C."/>
            <person name="Lloyd D.M."/>
            <person name="Loulseged H."/>
            <person name="Loveland J.E."/>
            <person name="Lovell J.D."/>
            <person name="Lozado R."/>
            <person name="Lu J."/>
            <person name="Lyne R."/>
            <person name="Ma J."/>
            <person name="Maheshwari M."/>
            <person name="Matthews L.H."/>
            <person name="McDowall J."/>
            <person name="McLaren S."/>
            <person name="McMurray A."/>
            <person name="Meidl P."/>
            <person name="Meitinger T."/>
            <person name="Milne S."/>
            <person name="Miner G."/>
            <person name="Mistry S.L."/>
            <person name="Morgan M."/>
            <person name="Morris S."/>
            <person name="Mueller I."/>
            <person name="Mullikin J.C."/>
            <person name="Nguyen N."/>
            <person name="Nordsiek G."/>
            <person name="Nyakatura G."/>
            <person name="O'dell C.N."/>
            <person name="Okwuonu G."/>
            <person name="Palmer S."/>
            <person name="Pandian R."/>
            <person name="Parker D."/>
            <person name="Parrish J."/>
            <person name="Pasternak S."/>
            <person name="Patel D."/>
            <person name="Pearce A.V."/>
            <person name="Pearson D.M."/>
            <person name="Pelan S.E."/>
            <person name="Perez L."/>
            <person name="Porter K.M."/>
            <person name="Ramsey Y."/>
            <person name="Reichwald K."/>
            <person name="Rhodes S."/>
            <person name="Ridler K.A."/>
            <person name="Schlessinger D."/>
            <person name="Schueler M.G."/>
            <person name="Sehra H.K."/>
            <person name="Shaw-Smith C."/>
            <person name="Shen H."/>
            <person name="Sheridan E.M."/>
            <person name="Shownkeen R."/>
            <person name="Skuce C.D."/>
            <person name="Smith M.L."/>
            <person name="Sotheran E.C."/>
            <person name="Steingruber H.E."/>
            <person name="Steward C.A."/>
            <person name="Storey R."/>
            <person name="Swann R.M."/>
            <person name="Swarbreck D."/>
            <person name="Tabor P.E."/>
            <person name="Taudien S."/>
            <person name="Taylor T."/>
            <person name="Teague B."/>
            <person name="Thomas K."/>
            <person name="Thorpe A."/>
            <person name="Timms K."/>
            <person name="Tracey A."/>
            <person name="Trevanion S."/>
            <person name="Tromans A.C."/>
            <person name="d'Urso M."/>
            <person name="Verduzco D."/>
            <person name="Villasana D."/>
            <person name="Waldron L."/>
            <person name="Wall M."/>
            <person name="Wang Q."/>
            <person name="Warren J."/>
            <person name="Warry G.L."/>
            <person name="Wei X."/>
            <person name="West A."/>
            <person name="Whitehead S.L."/>
            <person name="Whiteley M.N."/>
            <person name="Wilkinson J.E."/>
            <person name="Willey D.L."/>
            <person name="Williams G."/>
            <person name="Williams L."/>
            <person name="Williamson A."/>
            <person name="Williamson H."/>
            <person name="Wilming L."/>
            <person name="Woodmansey R.L."/>
            <person name="Wray P.W."/>
            <person name="Yen J."/>
            <person name="Zhang J."/>
            <person name="Zhou J."/>
            <person name="Zoghbi H."/>
            <person name="Zorilla S."/>
            <person name="Buck D."/>
            <person name="Reinhardt R."/>
            <person name="Poustka A."/>
            <person name="Rosenthal A."/>
            <person name="Lehrach H."/>
            <person name="Meindl A."/>
            <person name="Minx P.J."/>
            <person name="Hillier L.W."/>
            <person name="Willard H.F."/>
            <person name="Wilson R.K."/>
            <person name="Waterston R.H."/>
            <person name="Rice C.M."/>
            <person name="Vaudin M."/>
            <person name="Coulson A."/>
            <person name="Nelson D.L."/>
            <person name="Weinstock G."/>
            <person name="Sulston J.E."/>
            <person name="Durbin R.M."/>
            <person name="Hubbard T."/>
            <person name="Gibbs R.A."/>
            <person name="Beck S."/>
            <person name="Rogers J."/>
            <person name="Bentley D.R."/>
        </authorList>
    </citation>
    <scope>NUCLEOTIDE SEQUENCE [LARGE SCALE GENOMIC DNA]</scope>
</reference>
<reference key="5">
    <citation type="submission" date="2005-09" db="EMBL/GenBank/DDBJ databases">
        <authorList>
            <person name="Mural R.J."/>
            <person name="Istrail S."/>
            <person name="Sutton G.G."/>
            <person name="Florea L."/>
            <person name="Halpern A.L."/>
            <person name="Mobarry C.M."/>
            <person name="Lippert R."/>
            <person name="Walenz B."/>
            <person name="Shatkay H."/>
            <person name="Dew I."/>
            <person name="Miller J.R."/>
            <person name="Flanigan M.J."/>
            <person name="Edwards N.J."/>
            <person name="Bolanos R."/>
            <person name="Fasulo D."/>
            <person name="Halldorsson B.V."/>
            <person name="Hannenhalli S."/>
            <person name="Turner R."/>
            <person name="Yooseph S."/>
            <person name="Lu F."/>
            <person name="Nusskern D.R."/>
            <person name="Shue B.C."/>
            <person name="Zheng X.H."/>
            <person name="Zhong F."/>
            <person name="Delcher A.L."/>
            <person name="Huson D.H."/>
            <person name="Kravitz S.A."/>
            <person name="Mouchard L."/>
            <person name="Reinert K."/>
            <person name="Remington K.A."/>
            <person name="Clark A.G."/>
            <person name="Waterman M.S."/>
            <person name="Eichler E.E."/>
            <person name="Adams M.D."/>
            <person name="Hunkapiller M.W."/>
            <person name="Myers E.W."/>
            <person name="Venter J.C."/>
        </authorList>
    </citation>
    <scope>NUCLEOTIDE SEQUENCE [LARGE SCALE GENOMIC DNA]</scope>
</reference>
<reference key="6">
    <citation type="journal article" date="2004" name="Genome Res.">
        <title>The status, quality, and expansion of the NIH full-length cDNA project: the Mammalian Gene Collection (MGC).</title>
        <authorList>
            <consortium name="The MGC Project Team"/>
        </authorList>
    </citation>
    <scope>NUCLEOTIDE SEQUENCE [LARGE SCALE MRNA]</scope>
    <source>
        <tissue>Choriocarcinoma</tissue>
    </source>
</reference>
<reference key="7">
    <citation type="journal article" date="1998" name="EMBO J.">
        <title>Transcription elongation factor P-TEFb mediates Tat activation of HIV-1 transcription at multiple stages.</title>
        <authorList>
            <person name="Zhou Q."/>
            <person name="Chen D."/>
            <person name="Pierstorff E."/>
            <person name="Luo K."/>
        </authorList>
    </citation>
    <scope>INTERACTION WITH CDK9</scope>
</reference>
<reference key="8">
    <citation type="journal article" date="1998" name="Genes Dev.">
        <title>The HIV-1 Tat cellular coactivator Tat-SF1 is a general transcription elongation factor.</title>
        <authorList>
            <person name="Li X.-Y."/>
            <person name="Green M.R."/>
        </authorList>
    </citation>
    <scope>FUNCTION (MICROBIAL INFECTION)</scope>
</reference>
<reference key="9">
    <citation type="journal article" date="1998" name="Mol. Cell. Biol.">
        <title>CUS2, a yeast homolog of human Tat-SF1, rescues function of misfolded U2 through an unusual RNA recognition motif.</title>
        <authorList>
            <person name="Yan D."/>
            <person name="Perriman R."/>
            <person name="Igel H."/>
            <person name="Howe K.J."/>
            <person name="Neville M."/>
            <person name="Ares M. Jr."/>
        </authorList>
    </citation>
    <scope>INTERACTION WITH SF3A2</scope>
</reference>
<reference key="10">
    <citation type="journal article" date="1999" name="EMBO J.">
        <title>A novel RNA polymerase II-containing complex potentiates Tat-enhanced HIV-1 transcription.</title>
        <authorList>
            <person name="Parada C.A."/>
            <person name="Roeder R.G."/>
        </authorList>
    </citation>
    <scope>FUNCTION (MICROBIAL INFECTION)</scope>
    <scope>IDENTIFICATION IN A COMPLEX WITH NCL; CCNT1; RNA POLYMERASE II; SUPT5H AND CDK9</scope>
</reference>
<reference key="11">
    <citation type="journal article" date="1999" name="Mol. Cell. Biol.">
        <title>Tat-SF1 protein associates with RAP30 and human SPT5 proteins.</title>
        <authorList>
            <person name="Kim J.B."/>
            <person name="Yamaguchi Y."/>
            <person name="Wada T."/>
            <person name="Handa H."/>
            <person name="Sharp P.A."/>
        </authorList>
    </citation>
    <scope>FUNCTION</scope>
    <scope>INTERACTION WITH GTF2F2; SUPT5H AND POLR2A</scope>
</reference>
<reference key="12">
    <citation type="journal article" date="2000" name="Mol. Cell. Biol.">
        <title>Relief of two built-In autoinhibitory mechanisms in P-TEFb is required for assembly of a multicomponent transcription elongation complex at the human immunodeficiency virus type 1 promoter.</title>
        <authorList>
            <person name="Fong Y.W."/>
            <person name="Zhou Q."/>
        </authorList>
    </citation>
    <scope>FUNCTION</scope>
    <scope>INTERACTION WITH CCNT1</scope>
</reference>
<reference key="13">
    <citation type="journal article" date="2001" name="Immunity">
        <title>Nef triggers a transcriptional program in T cells imitating single-signal T cell activation and inducing HIV virulence mediators.</title>
        <authorList>
            <person name="Simmons A."/>
            <person name="Aluvihare V."/>
            <person name="McMichael A."/>
        </authorList>
    </citation>
    <scope>FUNCTION (MICROBIAL INFECTION)</scope>
</reference>
<reference key="14">
    <citation type="journal article" date="2001" name="Nature">
        <title>Stimulatory effect of splicing factors on transcriptional elongation.</title>
        <authorList>
            <person name="Fong Y.W."/>
            <person name="Zhou Q."/>
        </authorList>
    </citation>
    <scope>FUNCTION</scope>
    <scope>MUTAGENESIS OF TYR-136</scope>
    <scope>INTERACTION WITH U SNRNPS AND CCNT1</scope>
    <scope>DOMAIN</scope>
</reference>
<reference key="15">
    <citation type="journal article" date="2004" name="Mol. Cell. Biol.">
        <title>FF domains of CA150 bind transcription and splicing factors through multiple weak interactions.</title>
        <authorList>
            <person name="Smith M.J."/>
            <person name="Kulkarni S."/>
            <person name="Pawson T."/>
        </authorList>
    </citation>
    <scope>IDENTIFICATION BY MASS SPECTROMETRY</scope>
    <scope>INTERACTION WITH TCERG1</scope>
    <scope>SUBCELLULAR LOCATION</scope>
</reference>
<reference key="16">
    <citation type="journal article" date="2005" name="AIDS">
        <title>Soluble HIV-1 gp120 enhances HIV-1 replication in non-dividing CD4+ T cells, mediated via cell signaling and Tat cofactor overexpression.</title>
        <authorList>
            <person name="Misse D."/>
            <person name="Gajardo J."/>
            <person name="Oblet C."/>
            <person name="Religa A."/>
            <person name="Riquet N."/>
            <person name="Mathieu D."/>
            <person name="Yssel H."/>
            <person name="Veas F."/>
        </authorList>
    </citation>
    <scope>FUNCTION (MICROBIAL INFECTION)</scope>
</reference>
<reference key="17">
    <citation type="journal article" date="2006" name="Cell">
        <title>Global, in vivo, and site-specific phosphorylation dynamics in signaling networks.</title>
        <authorList>
            <person name="Olsen J.V."/>
            <person name="Blagoev B."/>
            <person name="Gnad F."/>
            <person name="Macek B."/>
            <person name="Kumar C."/>
            <person name="Mortensen P."/>
            <person name="Mann M."/>
        </authorList>
    </citation>
    <scope>PHOSPHORYLATION [LARGE SCALE ANALYSIS] AT SER-498; SER-557; SER-561; SER-579; SER-597; SER-600; SER-616; SER-624; SER-642; SER-676; SER-702; SER-713 AND SER-714</scope>
    <scope>IDENTIFICATION BY MASS SPECTROMETRY [LARGE SCALE ANALYSIS]</scope>
    <source>
        <tissue>Cervix carcinoma</tissue>
    </source>
</reference>
<reference key="18">
    <citation type="journal article" date="2008" name="Proc. Natl. Acad. Sci. U.S.A.">
        <title>A quantitative atlas of mitotic phosphorylation.</title>
        <authorList>
            <person name="Dephoure N."/>
            <person name="Zhou C."/>
            <person name="Villen J."/>
            <person name="Beausoleil S.A."/>
            <person name="Bakalarski C.E."/>
            <person name="Elledge S.J."/>
            <person name="Gygi S.P."/>
        </authorList>
    </citation>
    <scope>PHOSPHORYLATION [LARGE SCALE ANALYSIS] AT SER-452; SER-453; SER-498; SER-642; SER-713 AND SER-714</scope>
    <scope>IDENTIFICATION BY MASS SPECTROMETRY [LARGE SCALE ANALYSIS]</scope>
    <source>
        <tissue>Cervix carcinoma</tissue>
    </source>
</reference>
<reference key="19">
    <citation type="journal article" date="2008" name="Proteomics">
        <title>Large-scale phosphoproteome analysis of human liver tissue by enrichment and fractionation of phosphopeptides with strong anion exchange chromatography.</title>
        <authorList>
            <person name="Han G."/>
            <person name="Ye M."/>
            <person name="Zhou H."/>
            <person name="Jiang X."/>
            <person name="Feng S."/>
            <person name="Jiang X."/>
            <person name="Tian R."/>
            <person name="Wan D."/>
            <person name="Zou H."/>
            <person name="Gu J."/>
        </authorList>
    </citation>
    <scope>PHOSPHORYLATION [LARGE SCALE ANALYSIS] AT SER-579; SER-616; SER-624; SER-642 AND SER-676</scope>
    <scope>IDENTIFICATION BY MASS SPECTROMETRY [LARGE SCALE ANALYSIS]</scope>
    <source>
        <tissue>Liver</tissue>
    </source>
</reference>
<reference key="20">
    <citation type="journal article" date="2009" name="Anal. Chem.">
        <title>Lys-N and trypsin cover complementary parts of the phosphoproteome in a refined SCX-based approach.</title>
        <authorList>
            <person name="Gauci S."/>
            <person name="Helbig A.O."/>
            <person name="Slijper M."/>
            <person name="Krijgsveld J."/>
            <person name="Heck A.J."/>
            <person name="Mohammed S."/>
        </authorList>
    </citation>
    <scope>ACETYLATION [LARGE SCALE ANALYSIS] AT SER-2</scope>
    <scope>CLEAVAGE OF INITIATOR METHIONINE [LARGE SCALE ANALYSIS]</scope>
    <scope>IDENTIFICATION BY MASS SPECTROMETRY [LARGE SCALE ANALYSIS]</scope>
</reference>
<reference key="21">
    <citation type="journal article" date="2009" name="Sci. Signal.">
        <title>Quantitative phosphoproteomic analysis of T cell receptor signaling reveals system-wide modulation of protein-protein interactions.</title>
        <authorList>
            <person name="Mayya V."/>
            <person name="Lundgren D.H."/>
            <person name="Hwang S.-I."/>
            <person name="Rezaul K."/>
            <person name="Wu L."/>
            <person name="Eng J.K."/>
            <person name="Rodionov V."/>
            <person name="Han D.K."/>
        </authorList>
    </citation>
    <scope>PHOSPHORYLATION [LARGE SCALE ANALYSIS] AT SER-642; SER-702; SER-713 AND SER-714</scope>
    <scope>IDENTIFICATION BY MASS SPECTROMETRY [LARGE SCALE ANALYSIS]</scope>
    <source>
        <tissue>Leukemic T-cell</tissue>
    </source>
</reference>
<reference key="22">
    <citation type="journal article" date="2010" name="Sci. Signal.">
        <title>Quantitative phosphoproteomics reveals widespread full phosphorylation site occupancy during mitosis.</title>
        <authorList>
            <person name="Olsen J.V."/>
            <person name="Vermeulen M."/>
            <person name="Santamaria A."/>
            <person name="Kumar C."/>
            <person name="Miller M.L."/>
            <person name="Jensen L.J."/>
            <person name="Gnad F."/>
            <person name="Cox J."/>
            <person name="Jensen T.S."/>
            <person name="Nigg E.A."/>
            <person name="Brunak S."/>
            <person name="Mann M."/>
        </authorList>
    </citation>
    <scope>PHOSPHORYLATION [LARGE SCALE ANALYSIS] AT SER-387; SER-403; SER-407; SER-445; SER-498; SER-579; SER-616; SER-624; THR-633; SER-642; SER-676; SER-702; SER-713; SER-714 AND SER-721</scope>
    <scope>IDENTIFICATION BY MASS SPECTROMETRY [LARGE SCALE ANALYSIS]</scope>
    <source>
        <tissue>Cervix carcinoma</tissue>
    </source>
</reference>
<reference key="23">
    <citation type="journal article" date="2011" name="BMC Syst. Biol.">
        <title>Initial characterization of the human central proteome.</title>
        <authorList>
            <person name="Burkard T.R."/>
            <person name="Planyavsky M."/>
            <person name="Kaupe I."/>
            <person name="Breitwieser F.P."/>
            <person name="Buerckstuemmer T."/>
            <person name="Bennett K.L."/>
            <person name="Superti-Furga G."/>
            <person name="Colinge J."/>
        </authorList>
    </citation>
    <scope>IDENTIFICATION BY MASS SPECTROMETRY [LARGE SCALE ANALYSIS]</scope>
</reference>
<reference key="24">
    <citation type="journal article" date="2011" name="Sci. Signal.">
        <title>System-wide temporal characterization of the proteome and phosphoproteome of human embryonic stem cell differentiation.</title>
        <authorList>
            <person name="Rigbolt K.T."/>
            <person name="Prokhorova T.A."/>
            <person name="Akimov V."/>
            <person name="Henningsen J."/>
            <person name="Johansen P.T."/>
            <person name="Kratchmarova I."/>
            <person name="Kassem M."/>
            <person name="Mann M."/>
            <person name="Olsen J.V."/>
            <person name="Blagoev B."/>
        </authorList>
    </citation>
    <scope>PHOSPHORYLATION [LARGE SCALE ANALYSIS] AT SER-387; SER-485; SER-579; SER-597; SER-600; SER-607; SER-616; SER-642; SER-676; SER-702; SER-713; SER-714 AND SER-721</scope>
    <scope>IDENTIFICATION BY MASS SPECTROMETRY [LARGE SCALE ANALYSIS]</scope>
</reference>
<reference key="25">
    <citation type="journal article" date="2012" name="Mol. Cell. Proteomics">
        <title>Comparative large-scale characterisation of plant vs. mammal proteins reveals similar and idiosyncratic N-alpha acetylation features.</title>
        <authorList>
            <person name="Bienvenut W.V."/>
            <person name="Sumpton D."/>
            <person name="Martinez A."/>
            <person name="Lilla S."/>
            <person name="Espagne C."/>
            <person name="Meinnel T."/>
            <person name="Giglione C."/>
        </authorList>
    </citation>
    <scope>ACETYLATION [LARGE SCALE ANALYSIS] AT SER-2</scope>
    <scope>CLEAVAGE OF INITIATOR METHIONINE [LARGE SCALE ANALYSIS]</scope>
    <scope>IDENTIFICATION BY MASS SPECTROMETRY [LARGE SCALE ANALYSIS]</scope>
</reference>
<reference key="26">
    <citation type="journal article" date="2012" name="Proc. Natl. Acad. Sci. U.S.A.">
        <title>N-terminal acetylome analyses and functional insights of the N-terminal acetyltransferase NatB.</title>
        <authorList>
            <person name="Van Damme P."/>
            <person name="Lasa M."/>
            <person name="Polevoda B."/>
            <person name="Gazquez C."/>
            <person name="Elosegui-Artola A."/>
            <person name="Kim D.S."/>
            <person name="De Juan-Pardo E."/>
            <person name="Demeyer K."/>
            <person name="Hole K."/>
            <person name="Larrea E."/>
            <person name="Timmerman E."/>
            <person name="Prieto J."/>
            <person name="Arnesen T."/>
            <person name="Sherman F."/>
            <person name="Gevaert K."/>
            <person name="Aldabe R."/>
        </authorList>
    </citation>
    <scope>ACETYLATION [LARGE SCALE ANALYSIS] AT SER-2</scope>
    <scope>CLEAVAGE OF INITIATOR METHIONINE [LARGE SCALE ANALYSIS]</scope>
    <scope>IDENTIFICATION BY MASS SPECTROMETRY [LARGE SCALE ANALYSIS]</scope>
</reference>
<reference key="27">
    <citation type="journal article" date="2013" name="J. Proteome Res.">
        <title>Toward a comprehensive characterization of a human cancer cell phosphoproteome.</title>
        <authorList>
            <person name="Zhou H."/>
            <person name="Di Palma S."/>
            <person name="Preisinger C."/>
            <person name="Peng M."/>
            <person name="Polat A.N."/>
            <person name="Heck A.J."/>
            <person name="Mohammed S."/>
        </authorList>
    </citation>
    <scope>PHOSPHORYLATION [LARGE SCALE ANALYSIS] AT SER-445; SER-481; SER-494; SER-498; SER-521; SER-529; SER-579; SER-616; SER-624; SER-642; SER-676; SER-702; SER-713; SER-714 AND SER-721</scope>
    <scope>IDENTIFICATION BY MASS SPECTROMETRY [LARGE SCALE ANALYSIS]</scope>
    <source>
        <tissue>Cervix carcinoma</tissue>
        <tissue>Erythroleukemia</tissue>
    </source>
</reference>
<reference key="28">
    <citation type="journal article" date="2014" name="J. Proteomics">
        <title>An enzyme assisted RP-RPLC approach for in-depth analysis of human liver phosphoproteome.</title>
        <authorList>
            <person name="Bian Y."/>
            <person name="Song C."/>
            <person name="Cheng K."/>
            <person name="Dong M."/>
            <person name="Wang F."/>
            <person name="Huang J."/>
            <person name="Sun D."/>
            <person name="Wang L."/>
            <person name="Ye M."/>
            <person name="Zou H."/>
        </authorList>
    </citation>
    <scope>PHOSPHORYLATION [LARGE SCALE ANALYSIS] AT SER-579; SER-642 AND SER-702</scope>
    <scope>IDENTIFICATION BY MASS SPECTROMETRY [LARGE SCALE ANALYSIS]</scope>
    <source>
        <tissue>Liver</tissue>
    </source>
</reference>
<reference key="29">
    <citation type="journal article" date="2017" name="Nat. Struct. Mol. Biol.">
        <title>Site-specific mapping of the human SUMO proteome reveals co-modification with phosphorylation.</title>
        <authorList>
            <person name="Hendriks I.A."/>
            <person name="Lyon D."/>
            <person name="Young C."/>
            <person name="Jensen L.J."/>
            <person name="Vertegaal A.C."/>
            <person name="Nielsen M.L."/>
        </authorList>
    </citation>
    <scope>SUMOYLATION [LARGE SCALE ANALYSIS] AT LYS-429 AND LYS-430</scope>
    <scope>IDENTIFICATION BY MASS SPECTROMETRY [LARGE SCALE ANALYSIS]</scope>
</reference>
<reference key="30">
    <citation type="journal article" date="2022" name="Mol. Cell">
        <title>A PARylation-phosphorylation cascade promotes TOPBP1 loading and RPA-RAD51 exchange in homologous recombination.</title>
        <authorList>
            <person name="Zhao J."/>
            <person name="Tian S."/>
            <person name="Guo Q."/>
            <person name="Bao K."/>
            <person name="Yu G."/>
            <person name="Wang X."/>
            <person name="Shen X."/>
            <person name="Zhang J."/>
            <person name="Chen J."/>
            <person name="Yang Y."/>
            <person name="Liu L."/>
            <person name="Li X."/>
            <person name="Hao J."/>
            <person name="Yang N."/>
            <person name="Liu Z."/>
            <person name="Ai D."/>
            <person name="Yang J."/>
            <person name="Zhu Y."/>
            <person name="Yao Z."/>
            <person name="Ma S."/>
            <person name="Zhang K."/>
            <person name="Shi L."/>
        </authorList>
    </citation>
    <scope>FUNCTION</scope>
    <scope>SUBCELLULAR LOCATION</scope>
    <scope>PHOSPHORYLATION AT SER-748</scope>
    <scope>DOMAIN</scope>
    <scope>INTERACTION WITH RPA1 AND TOPBP1</scope>
    <scope>MUTAGENESIS OF 155-LYS-PHE-156; 297-LYS-PHE-298 AND SER-748</scope>
</reference>
<reference key="31">
    <citation type="submission" date="2006-09" db="PDB data bank">
        <title>Solution structure of the RRM_1 domain of HIV Tat specific factor 1 variant.</title>
        <authorList>
            <consortium name="RIKEN structural genomics initiative (RSGI)"/>
        </authorList>
    </citation>
    <scope>STRUCTURE BY NMR OF 256-354</scope>
</reference>
<reference evidence="24 25 26" key="32">
    <citation type="journal article" date="2019" name="J. Biol. Chem.">
        <title>The pre-mRNA splicing and transcription factor Tat-SF1 is a functional partner of the spliceosome SF3b1 subunit via a U2AF homology motif interface.</title>
        <authorList>
            <person name="Loerch S."/>
            <person name="Leach J.R."/>
            <person name="Horner S.W."/>
            <person name="Maji D."/>
            <person name="Jenkins J.L."/>
            <person name="Pulvino M.J."/>
            <person name="Kielkopf C.L."/>
        </authorList>
    </citation>
    <scope>X-RAY CRYSTALLOGRAPHY (1.13 ANGSTROMS) OF 260-353 IN COMPLEX WITH SF3B1</scope>
    <scope>INTERACTION WITH SF3B1</scope>
</reference>
<reference evidence="27 28 29" key="33">
    <citation type="journal article" date="2020" name="Nature">
        <title>Molecular architecture of the human 17S U2 snRNP.</title>
        <authorList>
            <person name="Zhang Z."/>
            <person name="Will C.L."/>
            <person name="Bertram K."/>
            <person name="Dybkov O."/>
            <person name="Hartmuth K."/>
            <person name="Agafonov D.E."/>
            <person name="Hofele R."/>
            <person name="Urlaub H."/>
            <person name="Kastner B."/>
            <person name="Luehrmann R."/>
            <person name="Stark H."/>
        </authorList>
    </citation>
    <scope>STRUCTURE BY ELECTRON MICROSCOPY (4.10 ANGSTROMS) IN COMPLEX WITH THE 17S U2 SNRNP COMPLEX</scope>
</reference>
<reference evidence="30" key="34">
    <citation type="journal article" date="2022" name="Science">
        <title>Structural basis of branch site recognition by the human spliceosome.</title>
        <authorList>
            <person name="Tholen J."/>
            <person name="Razew M."/>
            <person name="Weis F."/>
            <person name="Galej W.P."/>
        </authorList>
    </citation>
    <scope>STRUCTURE BY ELECTRON MICROSCOPY (2.30 ANGSTROMS) OF 2-755 IN COMPLEX WITH THE 17S U2 SNRNP COMPLEX</scope>
</reference>
<reference evidence="31" key="35">
    <citation type="journal article" date="2023" name="Nat. Commun.">
        <title>Mechanisms of the RNA helicases DDX42 and DDX46 in human U2 snRNP assembly.</title>
        <authorList>
            <person name="Yang F."/>
            <person name="Bian T."/>
            <person name="Zhan X."/>
            <person name="Chen Z."/>
            <person name="Xing Z."/>
            <person name="Larsen N.A."/>
            <person name="Zhang X."/>
            <person name="Shi Y."/>
        </authorList>
    </citation>
    <scope>STRUCTURE BY ELECTRON MICROSCOPY (2.70 ANGSTROMS) IN COMPLEX WITH THE 17S U2 SNRNP COMPLEX</scope>
</reference>
<accession>O43719</accession>
<accession>D3DWG9</accession>
<accession>Q59G06</accession>
<accession>Q99730</accession>
<gene>
    <name evidence="20 23" type="primary">HTATSF1</name>
</gene>
<comment type="function">
    <text evidence="5 6 8 11 12 13 14">Component of the 17S U2 SnRNP complex of the spliceosome, a large ribonucleoprotein complex that removes introns from transcribed pre-mRNAs (PubMed:30567737, PubMed:32494006, PubMed:34822310). The 17S U2 SnRNP complex (1) directly participates in early spliceosome assembly and (2) mediates recognition of the intron branch site during pre-mRNA splicing by promoting the selection of the pre-mRNA branch-site adenosine, the nucleophile for the first step of splicing (PubMed:30567737, PubMed:32494006, PubMed:34822310). Within the 17S U2 SnRNP complex, HTATSF1 is required to stabilize the branchpoint-interacting stem loop (PubMed:34822310). HTATSF1 is displaced from the 17S U2 SnRNP complex before the stable addition of the 17S U2 SnRNP complex to the spliceosome, destabilizing the branchpoint-interacting stem loop and allowing to probe intron branch site sequences (PubMed:32494006, PubMed:34822310). Also acts as a regulator of transcriptional elongation, possibly by mediating the reciprocal stimulatory effect of splicing on transcriptional elongation (PubMed:10454543, PubMed:10913173, PubMed:11780068). Involved in double-strand break (DSB) repair via homologous recombination in S-phase by promoting the recruitment of TOPBP1 to DNA damage sites (PubMed:35597237). Mechanistically, HTATSF1 is (1) recruited to DNA damage sites in S-phase via interaction with poly-ADP-ribosylated RPA1 and (2) phosphorylated by CK2, promoting recruitment of TOPBP1, thereby facilitating RAD51 nucleofilaments formation and RPA displacement, followed by homologous recombination (PubMed:35597237).</text>
</comment>
<comment type="function">
    <text evidence="4 7 10 15 18">(Microbial infection) In case of infection by HIV-1, it is up-regulated by the HIV-1 proteins NEF and gp120, acts as a cofactor required for the Tat-enhanced transcription of the virus.</text>
</comment>
<comment type="subunit">
    <text evidence="4 5 6 8 9 11 12 13 14 16 17">Component of the 17S U2 SnRNP complex, a ribonucleoprotein complex that contains small nuclear RNA (snRNA) U2 and a number of specific proteins (PubMed:11780068, PubMed:30567737, PubMed:32494006, PubMed:34822310, PubMed:9710584). Within the 17S U2 SnRNP complex, interacts (via UHM region) directly with SF3B1 (PubMed:30567737). Component of a complex which is at least composed of HTATSF1/Tat-SF1, the P-TEFb complex components CDK9 and CCNT1, RNA polymerase II, SUPT5H, and NCL/nucleolin (PubMed:10393184, PubMed:10454543, PubMed:10913173, PubMed:11780068, PubMed:9649438). Interacts with GTF2F2/RAP30 and POLR2A (PubMed:10454543). Interacts with TCERG1/CA150 (PubMed:15485897). Interacts with (poly-ADP-ribosylated) RPA1; promoting HTATSF1 recruitment to DNA damage sites (PubMed:35597237). Interacts (when phosphorylated) with TOPBP1; promoting recruitment of TOPBP1 to DNA damage sites during S-phase (PubMed:35597237).</text>
</comment>
<comment type="interaction">
    <interactant intactId="EBI-720468">
        <id>O43719</id>
    </interactant>
    <interactant intactId="EBI-2462271">
        <id>Q15428</id>
        <label>SF3A2</label>
    </interactant>
    <organismsDiffer>false</organismsDiffer>
    <experiments>2</experiments>
</comment>
<comment type="interaction">
    <interactant intactId="EBI-720468">
        <id>O43719</id>
    </interactant>
    <interactant intactId="EBI-15565798">
        <id>O75533-1</id>
        <label>SF3B1</label>
    </interactant>
    <organismsDiffer>false</organismsDiffer>
    <experiments>6</experiments>
</comment>
<comment type="subcellular location">
    <subcellularLocation>
        <location evidence="9 15">Nucleus</location>
    </subcellularLocation>
    <subcellularLocation>
        <location evidence="14">Chromosome</location>
    </subcellularLocation>
    <text evidence="14">Recruited to DNA damage sites during S-phase following interaction with poly-ADP-ribosylated RPA1.</text>
</comment>
<comment type="tissue specificity">
    <text evidence="15">Widely expressed.</text>
</comment>
<comment type="domain">
    <text evidence="8 14">The RRM domains mediate interaction with U snRNPs (PubMed:11780068). The RRM domains specifically bind poly-ADP-ribosylated RPA1 (PubMed:35597237).</text>
</comment>
<comment type="PTM">
    <text evidence="14">Phosphorylation at Ser-748 by CK2 during S-phase in response to DNA damage promotes interaction with TOPBP1 and double-strand break (DSB) repair via homologous recombination.</text>
</comment>
<comment type="similarity">
    <text evidence="22">Belongs to the HTATSF1 family.</text>
</comment>
<comment type="sequence caution" evidence="22">
    <conflict type="frameshift">
        <sequence resource="EMBL-CDS" id="AAB18823"/>
    </conflict>
</comment>
<comment type="sequence caution" evidence="22">
    <conflict type="erroneous initiation">
        <sequence resource="EMBL-CDS" id="BAD92540"/>
    </conflict>
</comment>
<dbReference type="EMBL" id="U76992">
    <property type="protein sequence ID" value="AAB18823.1"/>
    <property type="status" value="ALT_FRAME"/>
    <property type="molecule type" value="mRNA"/>
</dbReference>
<dbReference type="EMBL" id="BT006886">
    <property type="protein sequence ID" value="AAP35532.1"/>
    <property type="molecule type" value="mRNA"/>
</dbReference>
<dbReference type="EMBL" id="AB209303">
    <property type="protein sequence ID" value="BAD92540.1"/>
    <property type="status" value="ALT_INIT"/>
    <property type="molecule type" value="mRNA"/>
</dbReference>
<dbReference type="EMBL" id="Z97632">
    <property type="status" value="NOT_ANNOTATED_CDS"/>
    <property type="molecule type" value="Genomic_DNA"/>
</dbReference>
<dbReference type="EMBL" id="CH471150">
    <property type="protein sequence ID" value="EAW88468.1"/>
    <property type="molecule type" value="Genomic_DNA"/>
</dbReference>
<dbReference type="EMBL" id="CH471150">
    <property type="protein sequence ID" value="EAW88469.1"/>
    <property type="molecule type" value="Genomic_DNA"/>
</dbReference>
<dbReference type="EMBL" id="BC009896">
    <property type="protein sequence ID" value="AAH09896.1"/>
    <property type="molecule type" value="mRNA"/>
</dbReference>
<dbReference type="CCDS" id="CCDS14657.1"/>
<dbReference type="RefSeq" id="NP_001156752.1">
    <property type="nucleotide sequence ID" value="NM_001163280.2"/>
</dbReference>
<dbReference type="RefSeq" id="NP_055315.2">
    <property type="nucleotide sequence ID" value="NM_014500.4"/>
</dbReference>
<dbReference type="RefSeq" id="XP_005262461.1">
    <property type="nucleotide sequence ID" value="XM_005262404.3"/>
</dbReference>
<dbReference type="PDB" id="2DIT">
    <property type="method" value="NMR"/>
    <property type="chains" value="A=256-354"/>
</dbReference>
<dbReference type="PDB" id="6N3D">
    <property type="method" value="X-ray"/>
    <property type="resolution" value="1.13 A"/>
    <property type="chains" value="A=260-353"/>
</dbReference>
<dbReference type="PDB" id="6N3E">
    <property type="method" value="X-ray"/>
    <property type="resolution" value="1.89 A"/>
    <property type="chains" value="A=260-353"/>
</dbReference>
<dbReference type="PDB" id="6N3F">
    <property type="method" value="X-ray"/>
    <property type="resolution" value="2.10 A"/>
    <property type="chains" value="A/C=260-353"/>
</dbReference>
<dbReference type="PDB" id="6NSX">
    <property type="method" value="X-ray"/>
    <property type="resolution" value="2.00 A"/>
    <property type="chains" value="A=260-353"/>
</dbReference>
<dbReference type="PDB" id="6Y50">
    <property type="method" value="EM"/>
    <property type="resolution" value="4.10 A"/>
    <property type="chains" value="q=1-755"/>
</dbReference>
<dbReference type="PDB" id="6Y53">
    <property type="method" value="EM"/>
    <property type="resolution" value="7.10 A"/>
    <property type="chains" value="q=1-755"/>
</dbReference>
<dbReference type="PDB" id="6Y5Q">
    <property type="method" value="EM"/>
    <property type="resolution" value="7.10 A"/>
    <property type="chains" value="q=1-755"/>
</dbReference>
<dbReference type="PDB" id="7EVO">
    <property type="method" value="EM"/>
    <property type="resolution" value="2.50 A"/>
    <property type="chains" value="D=1-755"/>
</dbReference>
<dbReference type="PDB" id="7Q3L">
    <property type="method" value="EM"/>
    <property type="resolution" value="2.30 A"/>
    <property type="chains" value="q=2-755"/>
</dbReference>
<dbReference type="PDB" id="8HK1">
    <property type="method" value="EM"/>
    <property type="resolution" value="2.70 A"/>
    <property type="chains" value="D=1-755"/>
</dbReference>
<dbReference type="PDBsum" id="2DIT"/>
<dbReference type="PDBsum" id="6N3D"/>
<dbReference type="PDBsum" id="6N3E"/>
<dbReference type="PDBsum" id="6N3F"/>
<dbReference type="PDBsum" id="6NSX"/>
<dbReference type="PDBsum" id="6Y50"/>
<dbReference type="PDBsum" id="6Y53"/>
<dbReference type="PDBsum" id="6Y5Q"/>
<dbReference type="PDBsum" id="7EVO"/>
<dbReference type="PDBsum" id="7Q3L"/>
<dbReference type="PDBsum" id="8HK1"/>
<dbReference type="EMDB" id="EMD-10688"/>
<dbReference type="EMDB" id="EMD-10689"/>
<dbReference type="EMDB" id="EMD-13793"/>
<dbReference type="EMDB" id="EMD-31334"/>
<dbReference type="EMDB" id="EMD-34841"/>
<dbReference type="SMR" id="O43719"/>
<dbReference type="BioGRID" id="118149">
    <property type="interactions" value="151"/>
</dbReference>
<dbReference type="ComplexPortal" id="CPX-2539">
    <property type="entry name" value="U2 small nuclear ribonucleoprotein complex"/>
</dbReference>
<dbReference type="CORUM" id="O43719"/>
<dbReference type="DIP" id="DIP-42095N"/>
<dbReference type="FunCoup" id="O43719">
    <property type="interactions" value="2386"/>
</dbReference>
<dbReference type="IntAct" id="O43719">
    <property type="interactions" value="62"/>
</dbReference>
<dbReference type="MINT" id="O43719"/>
<dbReference type="STRING" id="9606.ENSP00000442699"/>
<dbReference type="GlyGen" id="O43719">
    <property type="glycosylation" value="4 sites, 1 N-linked glycan (1 site), 1 O-linked glycan (1 site)"/>
</dbReference>
<dbReference type="iPTMnet" id="O43719"/>
<dbReference type="MetOSite" id="O43719"/>
<dbReference type="PhosphoSitePlus" id="O43719"/>
<dbReference type="BioMuta" id="HTATSF1"/>
<dbReference type="jPOST" id="O43719"/>
<dbReference type="MassIVE" id="O43719"/>
<dbReference type="PaxDb" id="9606-ENSP00000442699"/>
<dbReference type="PeptideAtlas" id="O43719"/>
<dbReference type="ProteomicsDB" id="49133"/>
<dbReference type="Pumba" id="O43719"/>
<dbReference type="Antibodypedia" id="375">
    <property type="antibodies" value="273 antibodies from 34 providers"/>
</dbReference>
<dbReference type="DNASU" id="27336"/>
<dbReference type="Ensembl" id="ENST00000218364.5">
    <property type="protein sequence ID" value="ENSP00000218364.4"/>
    <property type="gene ID" value="ENSG00000102241.12"/>
</dbReference>
<dbReference type="Ensembl" id="ENST00000535601.5">
    <property type="protein sequence ID" value="ENSP00000442699.1"/>
    <property type="gene ID" value="ENSG00000102241.12"/>
</dbReference>
<dbReference type="GeneID" id="27336"/>
<dbReference type="KEGG" id="hsa:27336"/>
<dbReference type="MANE-Select" id="ENST00000218364.5">
    <property type="protein sequence ID" value="ENSP00000218364.4"/>
    <property type="RefSeq nucleotide sequence ID" value="NM_014500.5"/>
    <property type="RefSeq protein sequence ID" value="NP_055315.2"/>
</dbReference>
<dbReference type="UCSC" id="uc004ezw.4">
    <property type="organism name" value="human"/>
</dbReference>
<dbReference type="AGR" id="HGNC:5276"/>
<dbReference type="CTD" id="27336"/>
<dbReference type="DisGeNET" id="27336"/>
<dbReference type="GeneCards" id="HTATSF1"/>
<dbReference type="HGNC" id="HGNC:5276">
    <property type="gene designation" value="HTATSF1"/>
</dbReference>
<dbReference type="HPA" id="ENSG00000102241">
    <property type="expression patterns" value="Low tissue specificity"/>
</dbReference>
<dbReference type="MIM" id="300346">
    <property type="type" value="gene"/>
</dbReference>
<dbReference type="neXtProt" id="NX_O43719"/>
<dbReference type="OpenTargets" id="ENSG00000102241"/>
<dbReference type="PharmGKB" id="PA29540"/>
<dbReference type="VEuPathDB" id="HostDB:ENSG00000102241"/>
<dbReference type="eggNOG" id="KOG1548">
    <property type="taxonomic scope" value="Eukaryota"/>
</dbReference>
<dbReference type="GeneTree" id="ENSGT00390000009902"/>
<dbReference type="HOGENOM" id="CLU_406872_0_0_1"/>
<dbReference type="InParanoid" id="O43719"/>
<dbReference type="OMA" id="CAKFGQI"/>
<dbReference type="OrthoDB" id="10258585at2759"/>
<dbReference type="PAN-GO" id="O43719">
    <property type="GO annotations" value="3 GO annotations based on evolutionary models"/>
</dbReference>
<dbReference type="PhylomeDB" id="O43719"/>
<dbReference type="TreeFam" id="TF313623"/>
<dbReference type="PathwayCommons" id="O43719"/>
<dbReference type="Reactome" id="R-HSA-72163">
    <property type="pathway name" value="mRNA Splicing - Major Pathway"/>
</dbReference>
<dbReference type="SignaLink" id="O43719"/>
<dbReference type="SIGNOR" id="O43719"/>
<dbReference type="BioGRID-ORCS" id="27336">
    <property type="hits" value="371 hits in 788 CRISPR screens"/>
</dbReference>
<dbReference type="ChiTaRS" id="HTATSF1">
    <property type="organism name" value="human"/>
</dbReference>
<dbReference type="EvolutionaryTrace" id="O43719"/>
<dbReference type="GeneWiki" id="HTATSF1"/>
<dbReference type="GenomeRNAi" id="27336"/>
<dbReference type="Pharos" id="O43719">
    <property type="development level" value="Tbio"/>
</dbReference>
<dbReference type="PRO" id="PR:O43719"/>
<dbReference type="Proteomes" id="UP000005640">
    <property type="component" value="Chromosome X"/>
</dbReference>
<dbReference type="RNAct" id="O43719">
    <property type="molecule type" value="protein"/>
</dbReference>
<dbReference type="Bgee" id="ENSG00000102241">
    <property type="expression patterns" value="Expressed in sural nerve and 218 other cell types or tissues"/>
</dbReference>
<dbReference type="ExpressionAtlas" id="O43719">
    <property type="expression patterns" value="baseline and differential"/>
</dbReference>
<dbReference type="GO" id="GO:0005654">
    <property type="term" value="C:nucleoplasm"/>
    <property type="evidence" value="ECO:0000314"/>
    <property type="project" value="HPA"/>
</dbReference>
<dbReference type="GO" id="GO:0005634">
    <property type="term" value="C:nucleus"/>
    <property type="evidence" value="ECO:0000304"/>
    <property type="project" value="ProtInc"/>
</dbReference>
<dbReference type="GO" id="GO:0035861">
    <property type="term" value="C:site of double-strand break"/>
    <property type="evidence" value="ECO:0000314"/>
    <property type="project" value="UniProtKB"/>
</dbReference>
<dbReference type="GO" id="GO:0005681">
    <property type="term" value="C:spliceosomal complex"/>
    <property type="evidence" value="ECO:0000303"/>
    <property type="project" value="ComplexPortal"/>
</dbReference>
<dbReference type="GO" id="GO:0005686">
    <property type="term" value="C:U2 snRNP"/>
    <property type="evidence" value="ECO:0000318"/>
    <property type="project" value="GO_Central"/>
</dbReference>
<dbReference type="GO" id="GO:0005684">
    <property type="term" value="C:U2-type spliceosomal complex"/>
    <property type="evidence" value="ECO:0000314"/>
    <property type="project" value="UniProtKB"/>
</dbReference>
<dbReference type="GO" id="GO:0140463">
    <property type="term" value="F:chromatin-protein adaptor activity"/>
    <property type="evidence" value="ECO:0000314"/>
    <property type="project" value="UniProtKB"/>
</dbReference>
<dbReference type="GO" id="GO:0160004">
    <property type="term" value="F:poly-ADP-D-ribose modification-dependent protein binding"/>
    <property type="evidence" value="ECO:0000314"/>
    <property type="project" value="UniProtKB"/>
</dbReference>
<dbReference type="GO" id="GO:0003723">
    <property type="term" value="F:RNA binding"/>
    <property type="evidence" value="ECO:0007005"/>
    <property type="project" value="UniProtKB"/>
</dbReference>
<dbReference type="GO" id="GO:0000724">
    <property type="term" value="P:double-strand break repair via homologous recombination"/>
    <property type="evidence" value="ECO:0000314"/>
    <property type="project" value="UniProtKB"/>
</dbReference>
<dbReference type="GO" id="GO:0000398">
    <property type="term" value="P:mRNA splicing, via spliceosome"/>
    <property type="evidence" value="ECO:0000314"/>
    <property type="project" value="UniProtKB"/>
</dbReference>
<dbReference type="GO" id="GO:1990166">
    <property type="term" value="P:protein localization to site of double-strand break"/>
    <property type="evidence" value="ECO:0000314"/>
    <property type="project" value="UniProtKB"/>
</dbReference>
<dbReference type="GO" id="GO:1903241">
    <property type="term" value="P:U2-type prespliceosome assembly"/>
    <property type="evidence" value="ECO:0000314"/>
    <property type="project" value="UniProtKB"/>
</dbReference>
<dbReference type="CDD" id="cd12281">
    <property type="entry name" value="RRM1_TatSF1_like"/>
    <property type="match status" value="1"/>
</dbReference>
<dbReference type="CDD" id="cd12282">
    <property type="entry name" value="RRM2_TatSF1_like"/>
    <property type="match status" value="1"/>
</dbReference>
<dbReference type="FunFam" id="3.30.70.330:FF:000202">
    <property type="entry name" value="HIV Tat-specific factor 1"/>
    <property type="match status" value="1"/>
</dbReference>
<dbReference type="FunFam" id="3.30.70.330:FF:000105">
    <property type="entry name" value="HIV Tat-specific factor 1 homolog"/>
    <property type="match status" value="1"/>
</dbReference>
<dbReference type="Gene3D" id="3.30.70.330">
    <property type="match status" value="2"/>
</dbReference>
<dbReference type="InterPro" id="IPR012677">
    <property type="entry name" value="Nucleotide-bd_a/b_plait_sf"/>
</dbReference>
<dbReference type="InterPro" id="IPR035979">
    <property type="entry name" value="RBD_domain_sf"/>
</dbReference>
<dbReference type="InterPro" id="IPR000504">
    <property type="entry name" value="RRM_dom"/>
</dbReference>
<dbReference type="InterPro" id="IPR034393">
    <property type="entry name" value="TatSF1-like"/>
</dbReference>
<dbReference type="InterPro" id="IPR034392">
    <property type="entry name" value="TatSF1-like_RRM1"/>
</dbReference>
<dbReference type="PANTHER" id="PTHR15608:SF0">
    <property type="entry name" value="HIV TAT-SPECIFIC FACTOR 1"/>
    <property type="match status" value="1"/>
</dbReference>
<dbReference type="PANTHER" id="PTHR15608">
    <property type="entry name" value="SPLICING FACTOR U2AF-ASSOCIATED PROTEIN 2"/>
    <property type="match status" value="1"/>
</dbReference>
<dbReference type="Pfam" id="PF00076">
    <property type="entry name" value="RRM_1"/>
    <property type="match status" value="2"/>
</dbReference>
<dbReference type="SMART" id="SM00360">
    <property type="entry name" value="RRM"/>
    <property type="match status" value="2"/>
</dbReference>
<dbReference type="SUPFAM" id="SSF54928">
    <property type="entry name" value="RNA-binding domain, RBD"/>
    <property type="match status" value="1"/>
</dbReference>
<dbReference type="PROSITE" id="PS50102">
    <property type="entry name" value="RRM"/>
    <property type="match status" value="2"/>
</dbReference>
<keyword id="KW-0002">3D-structure</keyword>
<keyword id="KW-0007">Acetylation</keyword>
<keyword id="KW-0010">Activator</keyword>
<keyword id="KW-0158">Chromosome</keyword>
<keyword id="KW-0903">Direct protein sequencing</keyword>
<keyword id="KW-0227">DNA damage</keyword>
<keyword id="KW-0234">DNA repair</keyword>
<keyword id="KW-1017">Isopeptide bond</keyword>
<keyword id="KW-0507">mRNA processing</keyword>
<keyword id="KW-0508">mRNA splicing</keyword>
<keyword id="KW-0539">Nucleus</keyword>
<keyword id="KW-0597">Phosphoprotein</keyword>
<keyword id="KW-1267">Proteomics identification</keyword>
<keyword id="KW-1185">Reference proteome</keyword>
<keyword id="KW-0677">Repeat</keyword>
<keyword id="KW-0694">RNA-binding</keyword>
<keyword id="KW-0747">Spliceosome</keyword>
<keyword id="KW-0804">Transcription</keyword>
<keyword id="KW-0805">Transcription regulation</keyword>
<keyword id="KW-0832">Ubl conjugation</keyword>
<protein>
    <recommendedName>
        <fullName evidence="22">17S U2 SnRNP complex component HTATSF1</fullName>
    </recommendedName>
    <alternativeName>
        <fullName evidence="21">HIV Tat-specific factor 1</fullName>
        <shortName evidence="21">Tat-SF1</shortName>
    </alternativeName>
</protein>
<sequence>MSGTNLDGNDEFDEQLRMQELYGDGKDGDTQTDAGGEPDSLGQQPTDTPYEWDLDKKAWFPKITEDFIATYQANYGFSNDGASSSTANVEDVHARTAEEPPQEKAPEPTDARKKGEKRKAESGWFHVEEDRNTNVYVSGLPPDITVDEFIQLMSKFGIIMRDPQTEEFKVKLYKDNQGNLKGDGLCCYLKRESVELALKLLDEDEIRGYKLHVEVAKFQLKGEYDASKKKKKCKDYKKKLSMQQKQLDWRPERRAGPSRMRHERVVIIKNMFHPMDFEDDPLVLNEIREDLRVECSKFGQIRKLLLFDRHPDGVASVSFRDPEEADYCIQTLDGRWFGGRQITAQAWDGTTDYQVEETSREREERLRGWEAFLNAPEANRGLRRSDSVSASERAGPSRARHFSEHPSTSKMNAQETATGMAFEEPIDEKKFEKTEDGGEFEEGASENNAKESSPEKEAEEGCPEKESEEGCPKRGFEGSCSQKESEEGNPVRGSEEDSPKKESKKKTLKNDCEENGLAKESEDDLNKESEEEVGPTKESEEDDSEKESDEDCSEKQSEDGSEREFEENGLEKDLDEEGSEKELHENVLDKELEENDSENSEFEDDGSEKVLDEEGSEREFDEDSDEKEEEEDTYEKVFDDESDEKEDEEYADEKGLEAADKKAEEGDADEKLFEESDDKEDEDADGKEVEDADEKLFEDDDSNEKLFDEEEDSSEKLFDDSDERGTLGGFGSVEEGPLSTGSSFILSSDDDDDDI</sequence>
<organism>
    <name type="scientific">Homo sapiens</name>
    <name type="common">Human</name>
    <dbReference type="NCBI Taxonomy" id="9606"/>
    <lineage>
        <taxon>Eukaryota</taxon>
        <taxon>Metazoa</taxon>
        <taxon>Chordata</taxon>
        <taxon>Craniata</taxon>
        <taxon>Vertebrata</taxon>
        <taxon>Euteleostomi</taxon>
        <taxon>Mammalia</taxon>
        <taxon>Eutheria</taxon>
        <taxon>Euarchontoglires</taxon>
        <taxon>Primates</taxon>
        <taxon>Haplorrhini</taxon>
        <taxon>Catarrhini</taxon>
        <taxon>Hominidae</taxon>
        <taxon>Homo</taxon>
    </lineage>
</organism>
<proteinExistence type="evidence at protein level"/>
<name>HTSF1_HUMAN</name>
<evidence type="ECO:0000250" key="1">
    <source>
        <dbReference type="UniProtKB" id="Q8BGC0"/>
    </source>
</evidence>
<evidence type="ECO:0000255" key="2">
    <source>
        <dbReference type="PROSITE-ProRule" id="PRU00176"/>
    </source>
</evidence>
<evidence type="ECO:0000256" key="3">
    <source>
        <dbReference type="SAM" id="MobiDB-lite"/>
    </source>
</evidence>
<evidence type="ECO:0000269" key="4">
    <source>
    </source>
</evidence>
<evidence type="ECO:0000269" key="5">
    <source>
    </source>
</evidence>
<evidence type="ECO:0000269" key="6">
    <source>
    </source>
</evidence>
<evidence type="ECO:0000269" key="7">
    <source>
    </source>
</evidence>
<evidence type="ECO:0000269" key="8">
    <source>
    </source>
</evidence>
<evidence type="ECO:0000269" key="9">
    <source>
    </source>
</evidence>
<evidence type="ECO:0000269" key="10">
    <source>
    </source>
</evidence>
<evidence type="ECO:0000269" key="11">
    <source>
    </source>
</evidence>
<evidence type="ECO:0000269" key="12">
    <source>
    </source>
</evidence>
<evidence type="ECO:0000269" key="13">
    <source>
    </source>
</evidence>
<evidence type="ECO:0000269" key="14">
    <source>
    </source>
</evidence>
<evidence type="ECO:0000269" key="15">
    <source>
    </source>
</evidence>
<evidence type="ECO:0000269" key="16">
    <source>
    </source>
</evidence>
<evidence type="ECO:0000269" key="17">
    <source>
    </source>
</evidence>
<evidence type="ECO:0000269" key="18">
    <source>
    </source>
</evidence>
<evidence type="ECO:0000269" key="19">
    <source ref="3"/>
</evidence>
<evidence type="ECO:0000303" key="20">
    <source>
    </source>
</evidence>
<evidence type="ECO:0000303" key="21">
    <source>
    </source>
</evidence>
<evidence type="ECO:0000305" key="22"/>
<evidence type="ECO:0000312" key="23">
    <source>
        <dbReference type="HGNC" id="HGNC:5276"/>
    </source>
</evidence>
<evidence type="ECO:0007744" key="24">
    <source>
        <dbReference type="PDB" id="6N3D"/>
    </source>
</evidence>
<evidence type="ECO:0007744" key="25">
    <source>
        <dbReference type="PDB" id="6N3E"/>
    </source>
</evidence>
<evidence type="ECO:0007744" key="26">
    <source>
        <dbReference type="PDB" id="6N3F"/>
    </source>
</evidence>
<evidence type="ECO:0007744" key="27">
    <source>
        <dbReference type="PDB" id="6Y50"/>
    </source>
</evidence>
<evidence type="ECO:0007744" key="28">
    <source>
        <dbReference type="PDB" id="6Y53"/>
    </source>
</evidence>
<evidence type="ECO:0007744" key="29">
    <source>
        <dbReference type="PDB" id="6Y5Q"/>
    </source>
</evidence>
<evidence type="ECO:0007744" key="30">
    <source>
        <dbReference type="PDB" id="7Q3L"/>
    </source>
</evidence>
<evidence type="ECO:0007744" key="31">
    <source>
        <dbReference type="PDB" id="8HK1"/>
    </source>
</evidence>
<evidence type="ECO:0007744" key="32">
    <source>
    </source>
</evidence>
<evidence type="ECO:0007744" key="33">
    <source>
    </source>
</evidence>
<evidence type="ECO:0007744" key="34">
    <source>
    </source>
</evidence>
<evidence type="ECO:0007744" key="35">
    <source>
    </source>
</evidence>
<evidence type="ECO:0007744" key="36">
    <source>
    </source>
</evidence>
<evidence type="ECO:0007744" key="37">
    <source>
    </source>
</evidence>
<evidence type="ECO:0007744" key="38">
    <source>
    </source>
</evidence>
<evidence type="ECO:0007744" key="39">
    <source>
    </source>
</evidence>
<evidence type="ECO:0007744" key="40">
    <source>
    </source>
</evidence>
<evidence type="ECO:0007744" key="41">
    <source>
    </source>
</evidence>
<evidence type="ECO:0007744" key="42">
    <source>
    </source>
</evidence>
<evidence type="ECO:0007744" key="43">
    <source>
    </source>
</evidence>
<evidence type="ECO:0007829" key="44">
    <source>
        <dbReference type="PDB" id="6N3D"/>
    </source>
</evidence>
<evidence type="ECO:0007829" key="45">
    <source>
        <dbReference type="PDB" id="7EVO"/>
    </source>
</evidence>
<evidence type="ECO:0007829" key="46">
    <source>
        <dbReference type="PDB" id="7Q3L"/>
    </source>
</evidence>